<proteinExistence type="predicted"/>
<gene>
    <name type="primary">yazB</name>
    <name type="ordered locus">BSU00800</name>
</gene>
<protein>
    <recommendedName>
        <fullName>Uncharacterized HTH-type transcriptional regulator YazB</fullName>
    </recommendedName>
</protein>
<accession>O31417</accession>
<name>YAZB_BACSU</name>
<keyword id="KW-0238">DNA-binding</keyword>
<keyword id="KW-1185">Reference proteome</keyword>
<keyword id="KW-0804">Transcription</keyword>
<keyword id="KW-0805">Transcription regulation</keyword>
<reference key="1">
    <citation type="journal article" date="1997" name="Nature">
        <title>The complete genome sequence of the Gram-positive bacterium Bacillus subtilis.</title>
        <authorList>
            <person name="Kunst F."/>
            <person name="Ogasawara N."/>
            <person name="Moszer I."/>
            <person name="Albertini A.M."/>
            <person name="Alloni G."/>
            <person name="Azevedo V."/>
            <person name="Bertero M.G."/>
            <person name="Bessieres P."/>
            <person name="Bolotin A."/>
            <person name="Borchert S."/>
            <person name="Borriss R."/>
            <person name="Boursier L."/>
            <person name="Brans A."/>
            <person name="Braun M."/>
            <person name="Brignell S.C."/>
            <person name="Bron S."/>
            <person name="Brouillet S."/>
            <person name="Bruschi C.V."/>
            <person name="Caldwell B."/>
            <person name="Capuano V."/>
            <person name="Carter N.M."/>
            <person name="Choi S.-K."/>
            <person name="Codani J.-J."/>
            <person name="Connerton I.F."/>
            <person name="Cummings N.J."/>
            <person name="Daniel R.A."/>
            <person name="Denizot F."/>
            <person name="Devine K.M."/>
            <person name="Duesterhoeft A."/>
            <person name="Ehrlich S.D."/>
            <person name="Emmerson P.T."/>
            <person name="Entian K.-D."/>
            <person name="Errington J."/>
            <person name="Fabret C."/>
            <person name="Ferrari E."/>
            <person name="Foulger D."/>
            <person name="Fritz C."/>
            <person name="Fujita M."/>
            <person name="Fujita Y."/>
            <person name="Fuma S."/>
            <person name="Galizzi A."/>
            <person name="Galleron N."/>
            <person name="Ghim S.-Y."/>
            <person name="Glaser P."/>
            <person name="Goffeau A."/>
            <person name="Golightly E.J."/>
            <person name="Grandi G."/>
            <person name="Guiseppi G."/>
            <person name="Guy B.J."/>
            <person name="Haga K."/>
            <person name="Haiech J."/>
            <person name="Harwood C.R."/>
            <person name="Henaut A."/>
            <person name="Hilbert H."/>
            <person name="Holsappel S."/>
            <person name="Hosono S."/>
            <person name="Hullo M.-F."/>
            <person name="Itaya M."/>
            <person name="Jones L.-M."/>
            <person name="Joris B."/>
            <person name="Karamata D."/>
            <person name="Kasahara Y."/>
            <person name="Klaerr-Blanchard M."/>
            <person name="Klein C."/>
            <person name="Kobayashi Y."/>
            <person name="Koetter P."/>
            <person name="Koningstein G."/>
            <person name="Krogh S."/>
            <person name="Kumano M."/>
            <person name="Kurita K."/>
            <person name="Lapidus A."/>
            <person name="Lardinois S."/>
            <person name="Lauber J."/>
            <person name="Lazarevic V."/>
            <person name="Lee S.-M."/>
            <person name="Levine A."/>
            <person name="Liu H."/>
            <person name="Masuda S."/>
            <person name="Mauel C."/>
            <person name="Medigue C."/>
            <person name="Medina N."/>
            <person name="Mellado R.P."/>
            <person name="Mizuno M."/>
            <person name="Moestl D."/>
            <person name="Nakai S."/>
            <person name="Noback M."/>
            <person name="Noone D."/>
            <person name="O'Reilly M."/>
            <person name="Ogawa K."/>
            <person name="Ogiwara A."/>
            <person name="Oudega B."/>
            <person name="Park S.-H."/>
            <person name="Parro V."/>
            <person name="Pohl T.M."/>
            <person name="Portetelle D."/>
            <person name="Porwollik S."/>
            <person name="Prescott A.M."/>
            <person name="Presecan E."/>
            <person name="Pujic P."/>
            <person name="Purnelle B."/>
            <person name="Rapoport G."/>
            <person name="Rey M."/>
            <person name="Reynolds S."/>
            <person name="Rieger M."/>
            <person name="Rivolta C."/>
            <person name="Rocha E."/>
            <person name="Roche B."/>
            <person name="Rose M."/>
            <person name="Sadaie Y."/>
            <person name="Sato T."/>
            <person name="Scanlan E."/>
            <person name="Schleich S."/>
            <person name="Schroeter R."/>
            <person name="Scoffone F."/>
            <person name="Sekiguchi J."/>
            <person name="Sekowska A."/>
            <person name="Seror S.J."/>
            <person name="Serror P."/>
            <person name="Shin B.-S."/>
            <person name="Soldo B."/>
            <person name="Sorokin A."/>
            <person name="Tacconi E."/>
            <person name="Takagi T."/>
            <person name="Takahashi H."/>
            <person name="Takemaru K."/>
            <person name="Takeuchi M."/>
            <person name="Tamakoshi A."/>
            <person name="Tanaka T."/>
            <person name="Terpstra P."/>
            <person name="Tognoni A."/>
            <person name="Tosato V."/>
            <person name="Uchiyama S."/>
            <person name="Vandenbol M."/>
            <person name="Vannier F."/>
            <person name="Vassarotti A."/>
            <person name="Viari A."/>
            <person name="Wambutt R."/>
            <person name="Wedler E."/>
            <person name="Wedler H."/>
            <person name="Weitzenegger T."/>
            <person name="Winters P."/>
            <person name="Wipat A."/>
            <person name="Yamamoto H."/>
            <person name="Yamane K."/>
            <person name="Yasumoto K."/>
            <person name="Yata K."/>
            <person name="Yoshida K."/>
            <person name="Yoshikawa H.-F."/>
            <person name="Zumstein E."/>
            <person name="Yoshikawa H."/>
            <person name="Danchin A."/>
        </authorList>
    </citation>
    <scope>NUCLEOTIDE SEQUENCE [LARGE SCALE GENOMIC DNA]</scope>
    <source>
        <strain>168</strain>
    </source>
</reference>
<organism>
    <name type="scientific">Bacillus subtilis (strain 168)</name>
    <dbReference type="NCBI Taxonomy" id="224308"/>
    <lineage>
        <taxon>Bacteria</taxon>
        <taxon>Bacillati</taxon>
        <taxon>Bacillota</taxon>
        <taxon>Bacilli</taxon>
        <taxon>Bacillales</taxon>
        <taxon>Bacillaceae</taxon>
        <taxon>Bacillus</taxon>
    </lineage>
</organism>
<feature type="chain" id="PRO_0000149748" description="Uncharacterized HTH-type transcriptional regulator YazB">
    <location>
        <begin position="1"/>
        <end position="69"/>
    </location>
</feature>
<feature type="domain" description="HTH cro/C1-type" evidence="1">
    <location>
        <begin position="10"/>
        <end position="64"/>
    </location>
</feature>
<feature type="DNA-binding region" description="H-T-H motif" evidence="1">
    <location>
        <begin position="21"/>
        <end position="40"/>
    </location>
</feature>
<sequence length="69" mass="7553">MEAEIWGRRIRAFRKLKGYTQEGFAKALGISVSILGEIERGNRLPSAAIIQDAADVLNISADELAPPEK</sequence>
<evidence type="ECO:0000255" key="1">
    <source>
        <dbReference type="PROSITE-ProRule" id="PRU00257"/>
    </source>
</evidence>
<dbReference type="EMBL" id="AL009126">
    <property type="protein sequence ID" value="CAB11856.1"/>
    <property type="molecule type" value="Genomic_DNA"/>
</dbReference>
<dbReference type="PIR" id="B69742">
    <property type="entry name" value="B69742"/>
</dbReference>
<dbReference type="RefSeq" id="NP_387961.1">
    <property type="nucleotide sequence ID" value="NC_000964.3"/>
</dbReference>
<dbReference type="RefSeq" id="WP_003226678.1">
    <property type="nucleotide sequence ID" value="NZ_OZ025638.1"/>
</dbReference>
<dbReference type="SMR" id="O31417"/>
<dbReference type="FunCoup" id="O31417">
    <property type="interactions" value="133"/>
</dbReference>
<dbReference type="STRING" id="224308.BSU00800"/>
<dbReference type="PaxDb" id="224308-BSU00800"/>
<dbReference type="EnsemblBacteria" id="CAB11856">
    <property type="protein sequence ID" value="CAB11856"/>
    <property type="gene ID" value="BSU_00800"/>
</dbReference>
<dbReference type="GeneID" id="936295"/>
<dbReference type="KEGG" id="bsu:BSU00800"/>
<dbReference type="PATRIC" id="fig|224308.179.peg.80"/>
<dbReference type="eggNOG" id="COG1396">
    <property type="taxonomic scope" value="Bacteria"/>
</dbReference>
<dbReference type="InParanoid" id="O31417"/>
<dbReference type="OrthoDB" id="3035529at2"/>
<dbReference type="PhylomeDB" id="O31417"/>
<dbReference type="BioCyc" id="BSUB:BSU00800-MONOMER"/>
<dbReference type="Proteomes" id="UP000001570">
    <property type="component" value="Chromosome"/>
</dbReference>
<dbReference type="GO" id="GO:0003677">
    <property type="term" value="F:DNA binding"/>
    <property type="evidence" value="ECO:0007669"/>
    <property type="project" value="UniProtKB-KW"/>
</dbReference>
<dbReference type="GO" id="GO:0003700">
    <property type="term" value="F:DNA-binding transcription factor activity"/>
    <property type="evidence" value="ECO:0000318"/>
    <property type="project" value="GO_Central"/>
</dbReference>
<dbReference type="GO" id="GO:0006355">
    <property type="term" value="P:regulation of DNA-templated transcription"/>
    <property type="evidence" value="ECO:0000318"/>
    <property type="project" value="GO_Central"/>
</dbReference>
<dbReference type="CDD" id="cd00093">
    <property type="entry name" value="HTH_XRE"/>
    <property type="match status" value="1"/>
</dbReference>
<dbReference type="Gene3D" id="1.10.260.40">
    <property type="entry name" value="lambda repressor-like DNA-binding domains"/>
    <property type="match status" value="1"/>
</dbReference>
<dbReference type="InterPro" id="IPR050807">
    <property type="entry name" value="Bact_TransReg_Diox"/>
</dbReference>
<dbReference type="InterPro" id="IPR001387">
    <property type="entry name" value="Cro/C1-type_HTH"/>
</dbReference>
<dbReference type="InterPro" id="IPR010982">
    <property type="entry name" value="Lambda_DNA-bd_dom_sf"/>
</dbReference>
<dbReference type="PANTHER" id="PTHR46797">
    <property type="entry name" value="HTH-TYPE TRANSCRIPTIONAL REGULATOR"/>
    <property type="match status" value="1"/>
</dbReference>
<dbReference type="PANTHER" id="PTHR46797:SF1">
    <property type="entry name" value="METHYLPHOSPHONATE SYNTHASE"/>
    <property type="match status" value="1"/>
</dbReference>
<dbReference type="Pfam" id="PF01381">
    <property type="entry name" value="HTH_3"/>
    <property type="match status" value="1"/>
</dbReference>
<dbReference type="SMART" id="SM00530">
    <property type="entry name" value="HTH_XRE"/>
    <property type="match status" value="1"/>
</dbReference>
<dbReference type="SUPFAM" id="SSF47413">
    <property type="entry name" value="lambda repressor-like DNA-binding domains"/>
    <property type="match status" value="1"/>
</dbReference>
<dbReference type="PROSITE" id="PS50943">
    <property type="entry name" value="HTH_CROC1"/>
    <property type="match status" value="1"/>
</dbReference>